<keyword id="KW-0488">Methylation</keyword>
<keyword id="KW-1185">Reference proteome</keyword>
<keyword id="KW-0687">Ribonucleoprotein</keyword>
<keyword id="KW-0689">Ribosomal protein</keyword>
<keyword id="KW-0694">RNA-binding</keyword>
<keyword id="KW-0699">rRNA-binding</keyword>
<comment type="function">
    <text evidence="1">One of the primary rRNA binding proteins, it binds directly near the 3'-end of the 23S rRNA, where it nucleates assembly of the 50S subunit.</text>
</comment>
<comment type="subunit">
    <text evidence="1">Part of the 50S ribosomal subunit. Forms a cluster with proteins L14 and L19.</text>
</comment>
<comment type="PTM">
    <text evidence="1">Methylated by PrmB.</text>
</comment>
<comment type="similarity">
    <text evidence="1">Belongs to the universal ribosomal protein uL3 family.</text>
</comment>
<organism>
    <name type="scientific">Cellvibrio japonicus (strain Ueda107)</name>
    <name type="common">Pseudomonas fluorescens subsp. cellulosa</name>
    <dbReference type="NCBI Taxonomy" id="498211"/>
    <lineage>
        <taxon>Bacteria</taxon>
        <taxon>Pseudomonadati</taxon>
        <taxon>Pseudomonadota</taxon>
        <taxon>Gammaproteobacteria</taxon>
        <taxon>Cellvibrionales</taxon>
        <taxon>Cellvibrionaceae</taxon>
        <taxon>Cellvibrio</taxon>
    </lineage>
</organism>
<dbReference type="EMBL" id="CP000934">
    <property type="protein sequence ID" value="ACE84264.1"/>
    <property type="molecule type" value="Genomic_DNA"/>
</dbReference>
<dbReference type="RefSeq" id="WP_012486362.1">
    <property type="nucleotide sequence ID" value="NC_010995.1"/>
</dbReference>
<dbReference type="SMR" id="B3PK37"/>
<dbReference type="STRING" id="498211.CJA_0699"/>
<dbReference type="KEGG" id="cja:CJA_0699"/>
<dbReference type="eggNOG" id="COG0087">
    <property type="taxonomic scope" value="Bacteria"/>
</dbReference>
<dbReference type="HOGENOM" id="CLU_044142_4_1_6"/>
<dbReference type="OrthoDB" id="9806135at2"/>
<dbReference type="Proteomes" id="UP000001036">
    <property type="component" value="Chromosome"/>
</dbReference>
<dbReference type="GO" id="GO:0022625">
    <property type="term" value="C:cytosolic large ribosomal subunit"/>
    <property type="evidence" value="ECO:0007669"/>
    <property type="project" value="TreeGrafter"/>
</dbReference>
<dbReference type="GO" id="GO:0019843">
    <property type="term" value="F:rRNA binding"/>
    <property type="evidence" value="ECO:0007669"/>
    <property type="project" value="UniProtKB-UniRule"/>
</dbReference>
<dbReference type="GO" id="GO:0003735">
    <property type="term" value="F:structural constituent of ribosome"/>
    <property type="evidence" value="ECO:0007669"/>
    <property type="project" value="InterPro"/>
</dbReference>
<dbReference type="GO" id="GO:0006412">
    <property type="term" value="P:translation"/>
    <property type="evidence" value="ECO:0007669"/>
    <property type="project" value="UniProtKB-UniRule"/>
</dbReference>
<dbReference type="FunFam" id="2.40.30.10:FF:000004">
    <property type="entry name" value="50S ribosomal protein L3"/>
    <property type="match status" value="1"/>
</dbReference>
<dbReference type="FunFam" id="3.30.160.810:FF:000001">
    <property type="entry name" value="50S ribosomal protein L3"/>
    <property type="match status" value="1"/>
</dbReference>
<dbReference type="Gene3D" id="3.30.160.810">
    <property type="match status" value="1"/>
</dbReference>
<dbReference type="Gene3D" id="2.40.30.10">
    <property type="entry name" value="Translation factors"/>
    <property type="match status" value="1"/>
</dbReference>
<dbReference type="HAMAP" id="MF_01325_B">
    <property type="entry name" value="Ribosomal_uL3_B"/>
    <property type="match status" value="1"/>
</dbReference>
<dbReference type="InterPro" id="IPR000597">
    <property type="entry name" value="Ribosomal_uL3"/>
</dbReference>
<dbReference type="InterPro" id="IPR019927">
    <property type="entry name" value="Ribosomal_uL3_bac/org-type"/>
</dbReference>
<dbReference type="InterPro" id="IPR019926">
    <property type="entry name" value="Ribosomal_uL3_CS"/>
</dbReference>
<dbReference type="InterPro" id="IPR009000">
    <property type="entry name" value="Transl_B-barrel_sf"/>
</dbReference>
<dbReference type="NCBIfam" id="TIGR03625">
    <property type="entry name" value="L3_bact"/>
    <property type="match status" value="1"/>
</dbReference>
<dbReference type="PANTHER" id="PTHR11229">
    <property type="entry name" value="50S RIBOSOMAL PROTEIN L3"/>
    <property type="match status" value="1"/>
</dbReference>
<dbReference type="PANTHER" id="PTHR11229:SF16">
    <property type="entry name" value="LARGE RIBOSOMAL SUBUNIT PROTEIN UL3C"/>
    <property type="match status" value="1"/>
</dbReference>
<dbReference type="Pfam" id="PF00297">
    <property type="entry name" value="Ribosomal_L3"/>
    <property type="match status" value="1"/>
</dbReference>
<dbReference type="SUPFAM" id="SSF50447">
    <property type="entry name" value="Translation proteins"/>
    <property type="match status" value="1"/>
</dbReference>
<dbReference type="PROSITE" id="PS00474">
    <property type="entry name" value="RIBOSOMAL_L3"/>
    <property type="match status" value="1"/>
</dbReference>
<gene>
    <name evidence="1" type="primary">rplC</name>
    <name type="ordered locus">CJA_0699</name>
</gene>
<accession>B3PK37</accession>
<proteinExistence type="inferred from homology"/>
<protein>
    <recommendedName>
        <fullName evidence="1">Large ribosomal subunit protein uL3</fullName>
    </recommendedName>
    <alternativeName>
        <fullName evidence="3">50S ribosomal protein L3</fullName>
    </alternativeName>
</protein>
<name>RL3_CELJU</name>
<sequence length="214" mass="22839">MTIGIVGRKTGMTRVFTDDGVSIPVTVIEVEPNRVTQVKTADTDGYSAVQITVGERRASRVTKSEAGHFAKANVEAGRSVWELRNNSQEAFEVGASLTVEAFSAGQFIDVTGTSKGKGYAGTVKRWNFGMQDATHGNSRSHRVPGSTGQCQSPGRVFKNKKMTGHMGAERVTVQNLEIVRVDAERNLLLVKGAIPGAPGGDVIVRPAVKARTNA</sequence>
<evidence type="ECO:0000255" key="1">
    <source>
        <dbReference type="HAMAP-Rule" id="MF_01325"/>
    </source>
</evidence>
<evidence type="ECO:0000256" key="2">
    <source>
        <dbReference type="SAM" id="MobiDB-lite"/>
    </source>
</evidence>
<evidence type="ECO:0000305" key="3"/>
<feature type="chain" id="PRO_1000141837" description="Large ribosomal subunit protein uL3">
    <location>
        <begin position="1"/>
        <end position="214"/>
    </location>
</feature>
<feature type="region of interest" description="Disordered" evidence="2">
    <location>
        <begin position="133"/>
        <end position="155"/>
    </location>
</feature>
<feature type="modified residue" description="N5-methylglutamine" evidence="1">
    <location>
        <position position="151"/>
    </location>
</feature>
<reference key="1">
    <citation type="journal article" date="2008" name="J. Bacteriol.">
        <title>Insights into plant cell wall degradation from the genome sequence of the soil bacterium Cellvibrio japonicus.</title>
        <authorList>
            <person name="DeBoy R.T."/>
            <person name="Mongodin E.F."/>
            <person name="Fouts D.E."/>
            <person name="Tailford L.E."/>
            <person name="Khouri H."/>
            <person name="Emerson J.B."/>
            <person name="Mohamoud Y."/>
            <person name="Watkins K."/>
            <person name="Henrissat B."/>
            <person name="Gilbert H.J."/>
            <person name="Nelson K.E."/>
        </authorList>
    </citation>
    <scope>NUCLEOTIDE SEQUENCE [LARGE SCALE GENOMIC DNA]</scope>
    <source>
        <strain>Ueda107</strain>
    </source>
</reference>